<sequence>MDNDKKHVIPREQYRRKRHEYFHNEEREERLEREREQRERLAKKEQEQAKVNEERVKDNMRKARIEKLTQEEIHQQQHLAKLRSDNESDQELNDTNTHHLTLPEEQQLKNEHKENNDKVTKPTDEMEKQEKEDNNSASSKHDEIEPKYSRVEKNKGKQKQDNINKSEVNHLDKSEQTKKHKETKESSEDVLETNKSQKIEQKEQKASSNETSNKELNSYTKDKNNKVEDNQDLKKASSQNLAHSNKLEENEHLENEPKNNDTMDKVKDFLKLHWLKIVIVVAIILIVILISAIISTMNQNSSIEQSSNNDTKYTTTMKNAETAVKSVVTIENDTPKNITTQTIDKTNINSNNEVGSGVVYKAVDDTFFILTNTHIVGSNKRVNITYDDDKTATATVVGRDMWSDIAVLKATIKNKNMQPIKIGHSKHLKLGESILVVGNPLGNDFKNTVTKGIISGLNRAVPVDFDKDNKNDEWVNTFQIDASVNPGNSGGAVVNRVGELVGLVSLKINMPNIEGMGFAIPIDAAREIAEELEKKGEIQYPNTGIGIKNVSDLMPYERNLLKVPEDVQNGIVVEKLKENGLGKKSGLKIGDVVVELDSKSIQNNLQYRQIIFNHRQDLKTLSAKIYREGKSQEIRIKLK</sequence>
<accession>Q4L530</accession>
<reference key="1">
    <citation type="journal article" date="2005" name="J. Bacteriol.">
        <title>Whole-genome sequencing of Staphylococcus haemolyticus uncovers the extreme plasticity of its genome and the evolution of human-colonizing staphylococcal species.</title>
        <authorList>
            <person name="Takeuchi F."/>
            <person name="Watanabe S."/>
            <person name="Baba T."/>
            <person name="Yuzawa H."/>
            <person name="Ito T."/>
            <person name="Morimoto Y."/>
            <person name="Kuroda M."/>
            <person name="Cui L."/>
            <person name="Takahashi M."/>
            <person name="Ankai A."/>
            <person name="Baba S."/>
            <person name="Fukui S."/>
            <person name="Lee J.C."/>
            <person name="Hiramatsu K."/>
        </authorList>
    </citation>
    <scope>NUCLEOTIDE SEQUENCE [LARGE SCALE GENOMIC DNA]</scope>
    <source>
        <strain>JCSC1435</strain>
    </source>
</reference>
<proteinExistence type="inferred from homology"/>
<organism>
    <name type="scientific">Staphylococcus haemolyticus (strain JCSC1435)</name>
    <dbReference type="NCBI Taxonomy" id="279808"/>
    <lineage>
        <taxon>Bacteria</taxon>
        <taxon>Bacillati</taxon>
        <taxon>Bacillota</taxon>
        <taxon>Bacilli</taxon>
        <taxon>Bacillales</taxon>
        <taxon>Staphylococcaceae</taxon>
        <taxon>Staphylococcus</taxon>
    </lineage>
</organism>
<dbReference type="EC" id="3.4.21.-"/>
<dbReference type="EMBL" id="AP006716">
    <property type="protein sequence ID" value="BAE05245.1"/>
    <property type="molecule type" value="Genomic_DNA"/>
</dbReference>
<dbReference type="RefSeq" id="WP_011276206.1">
    <property type="nucleotide sequence ID" value="NC_007168.1"/>
</dbReference>
<dbReference type="SMR" id="Q4L530"/>
<dbReference type="KEGG" id="sha:SH1936"/>
<dbReference type="eggNOG" id="COG0265">
    <property type="taxonomic scope" value="Bacteria"/>
</dbReference>
<dbReference type="HOGENOM" id="CLU_027421_0_0_9"/>
<dbReference type="OrthoDB" id="9758917at2"/>
<dbReference type="Proteomes" id="UP000000543">
    <property type="component" value="Chromosome"/>
</dbReference>
<dbReference type="GO" id="GO:0005886">
    <property type="term" value="C:plasma membrane"/>
    <property type="evidence" value="ECO:0007669"/>
    <property type="project" value="UniProtKB-SubCell"/>
</dbReference>
<dbReference type="GO" id="GO:0004252">
    <property type="term" value="F:serine-type endopeptidase activity"/>
    <property type="evidence" value="ECO:0007669"/>
    <property type="project" value="InterPro"/>
</dbReference>
<dbReference type="GO" id="GO:0006508">
    <property type="term" value="P:proteolysis"/>
    <property type="evidence" value="ECO:0007669"/>
    <property type="project" value="UniProtKB-KW"/>
</dbReference>
<dbReference type="CDD" id="cd06781">
    <property type="entry name" value="cpPDZ_BsHtra-like"/>
    <property type="match status" value="1"/>
</dbReference>
<dbReference type="Gene3D" id="2.30.42.10">
    <property type="match status" value="1"/>
</dbReference>
<dbReference type="Gene3D" id="2.40.10.10">
    <property type="entry name" value="Trypsin-like serine proteases"/>
    <property type="match status" value="2"/>
</dbReference>
<dbReference type="InterPro" id="IPR051201">
    <property type="entry name" value="Chloro_Bact_Ser_Proteases"/>
</dbReference>
<dbReference type="InterPro" id="IPR001478">
    <property type="entry name" value="PDZ"/>
</dbReference>
<dbReference type="InterPro" id="IPR036034">
    <property type="entry name" value="PDZ_sf"/>
</dbReference>
<dbReference type="InterPro" id="IPR009003">
    <property type="entry name" value="Peptidase_S1_PA"/>
</dbReference>
<dbReference type="InterPro" id="IPR043504">
    <property type="entry name" value="Peptidase_S1_PA_chymotrypsin"/>
</dbReference>
<dbReference type="InterPro" id="IPR001940">
    <property type="entry name" value="Peptidase_S1C"/>
</dbReference>
<dbReference type="PANTHER" id="PTHR43343">
    <property type="entry name" value="PEPTIDASE S12"/>
    <property type="match status" value="1"/>
</dbReference>
<dbReference type="PANTHER" id="PTHR43343:SF3">
    <property type="entry name" value="PROTEASE DO-LIKE 8, CHLOROPLASTIC"/>
    <property type="match status" value="1"/>
</dbReference>
<dbReference type="Pfam" id="PF13180">
    <property type="entry name" value="PDZ_2"/>
    <property type="match status" value="1"/>
</dbReference>
<dbReference type="Pfam" id="PF13365">
    <property type="entry name" value="Trypsin_2"/>
    <property type="match status" value="1"/>
</dbReference>
<dbReference type="PRINTS" id="PR00834">
    <property type="entry name" value="PROTEASES2C"/>
</dbReference>
<dbReference type="SMART" id="SM00228">
    <property type="entry name" value="PDZ"/>
    <property type="match status" value="1"/>
</dbReference>
<dbReference type="SUPFAM" id="SSF50156">
    <property type="entry name" value="PDZ domain-like"/>
    <property type="match status" value="1"/>
</dbReference>
<dbReference type="SUPFAM" id="SSF50494">
    <property type="entry name" value="Trypsin-like serine proteases"/>
    <property type="match status" value="1"/>
</dbReference>
<gene>
    <name type="ordered locus">SH1936</name>
</gene>
<name>HTRAL_STAHJ</name>
<comment type="subcellular location">
    <subcellularLocation>
        <location evidence="3">Cell membrane</location>
        <topology evidence="3">Single-pass membrane protein</topology>
    </subcellularLocation>
</comment>
<comment type="similarity">
    <text evidence="3">Belongs to the peptidase S1C family.</text>
</comment>
<keyword id="KW-1003">Cell membrane</keyword>
<keyword id="KW-0378">Hydrolase</keyword>
<keyword id="KW-0472">Membrane</keyword>
<keyword id="KW-0645">Protease</keyword>
<keyword id="KW-0720">Serine protease</keyword>
<keyword id="KW-0812">Transmembrane</keyword>
<keyword id="KW-1133">Transmembrane helix</keyword>
<protein>
    <recommendedName>
        <fullName>Serine protease HtrA-like</fullName>
        <ecNumber>3.4.21.-</ecNumber>
    </recommendedName>
</protein>
<feature type="chain" id="PRO_0000252473" description="Serine protease HtrA-like">
    <location>
        <begin position="1"/>
        <end position="639"/>
    </location>
</feature>
<feature type="transmembrane region" description="Helical" evidence="1">
    <location>
        <begin position="277"/>
        <end position="297"/>
    </location>
</feature>
<feature type="domain" description="PDZ">
    <location>
        <begin position="527"/>
        <end position="629"/>
    </location>
</feature>
<feature type="region of interest" description="Disordered" evidence="2">
    <location>
        <begin position="1"/>
        <end position="262"/>
    </location>
</feature>
<feature type="compositionally biased region" description="Basic and acidic residues" evidence="2">
    <location>
        <begin position="1"/>
        <end position="13"/>
    </location>
</feature>
<feature type="compositionally biased region" description="Basic and acidic residues" evidence="2">
    <location>
        <begin position="21"/>
        <end position="75"/>
    </location>
</feature>
<feature type="compositionally biased region" description="Basic and acidic residues" evidence="2">
    <location>
        <begin position="106"/>
        <end position="187"/>
    </location>
</feature>
<feature type="compositionally biased region" description="Basic and acidic residues" evidence="2">
    <location>
        <begin position="195"/>
        <end position="205"/>
    </location>
</feature>
<feature type="compositionally biased region" description="Polar residues" evidence="2">
    <location>
        <begin position="206"/>
        <end position="219"/>
    </location>
</feature>
<feature type="compositionally biased region" description="Basic and acidic residues" evidence="2">
    <location>
        <begin position="220"/>
        <end position="235"/>
    </location>
</feature>
<feature type="compositionally biased region" description="Basic and acidic residues" evidence="2">
    <location>
        <begin position="245"/>
        <end position="262"/>
    </location>
</feature>
<feature type="active site" description="Charge relay system" evidence="1">
    <location>
        <position position="374"/>
    </location>
</feature>
<feature type="active site" description="Charge relay system" evidence="1">
    <location>
        <position position="404"/>
    </location>
</feature>
<feature type="active site" description="Charge relay system" evidence="1">
    <location>
        <position position="489"/>
    </location>
</feature>
<evidence type="ECO:0000255" key="1"/>
<evidence type="ECO:0000256" key="2">
    <source>
        <dbReference type="SAM" id="MobiDB-lite"/>
    </source>
</evidence>
<evidence type="ECO:0000305" key="3"/>